<dbReference type="EMBL" id="AK010364">
    <property type="protein sequence ID" value="BAB26884.1"/>
    <property type="molecule type" value="mRNA"/>
</dbReference>
<dbReference type="EMBL" id="AK031630">
    <property type="protein sequence ID" value="BAC27487.1"/>
    <property type="molecule type" value="mRNA"/>
</dbReference>
<dbReference type="EMBL" id="AK034103">
    <property type="protein sequence ID" value="BAC28588.1"/>
    <property type="molecule type" value="mRNA"/>
</dbReference>
<dbReference type="EMBL" id="AK049345">
    <property type="protein sequence ID" value="BAC33697.1"/>
    <property type="molecule type" value="mRNA"/>
</dbReference>
<dbReference type="EMBL" id="AK087973">
    <property type="protein sequence ID" value="BAC40067.1"/>
    <property type="molecule type" value="mRNA"/>
</dbReference>
<dbReference type="EMBL" id="BC024500">
    <property type="protein sequence ID" value="AAH24500.1"/>
    <property type="molecule type" value="mRNA"/>
</dbReference>
<dbReference type="EMBL" id="BC045200">
    <property type="protein sequence ID" value="AAH45200.1"/>
    <property type="molecule type" value="mRNA"/>
</dbReference>
<dbReference type="CCDS" id="CCDS22555.1"/>
<dbReference type="RefSeq" id="NP_083081.2">
    <property type="nucleotide sequence ID" value="NM_028805.2"/>
</dbReference>
<dbReference type="RefSeq" id="XP_006531473.1">
    <property type="nucleotide sequence ID" value="XM_006531410.4"/>
</dbReference>
<dbReference type="RefSeq" id="XP_006531474.1">
    <property type="nucleotide sequence ID" value="XM_006531411.5"/>
</dbReference>
<dbReference type="RefSeq" id="XP_006531475.1">
    <property type="nucleotide sequence ID" value="XM_006531412.1"/>
</dbReference>
<dbReference type="PDB" id="5LB7">
    <property type="method" value="X-ray"/>
    <property type="resolution" value="1.50 A"/>
    <property type="chains" value="A=485-656, A=481-658"/>
</dbReference>
<dbReference type="PDB" id="5NBT">
    <property type="method" value="X-ray"/>
    <property type="resolution" value="2.40 A"/>
    <property type="chains" value="A/C=481-658"/>
</dbReference>
<dbReference type="PDB" id="5OW5">
    <property type="method" value="X-ray"/>
    <property type="resolution" value="1.70 A"/>
    <property type="chains" value="A/C=481-658"/>
</dbReference>
<dbReference type="PDB" id="6GZC">
    <property type="method" value="X-ray"/>
    <property type="resolution" value="2.00 A"/>
    <property type="chains" value="A/C=481-658"/>
</dbReference>
<dbReference type="PDBsum" id="5LB7"/>
<dbReference type="PDBsum" id="5NBT"/>
<dbReference type="PDBsum" id="5OW5"/>
<dbReference type="PDBsum" id="6GZC"/>
<dbReference type="SMR" id="Q8BG40"/>
<dbReference type="BioGRID" id="216559">
    <property type="interactions" value="6"/>
</dbReference>
<dbReference type="FunCoup" id="Q8BG40">
    <property type="interactions" value="1056"/>
</dbReference>
<dbReference type="IntAct" id="Q8BG40">
    <property type="interactions" value="2"/>
</dbReference>
<dbReference type="MINT" id="Q8BG40"/>
<dbReference type="STRING" id="10090.ENSMUSP00000034239"/>
<dbReference type="iPTMnet" id="Q8BG40"/>
<dbReference type="PhosphoSitePlus" id="Q8BG40"/>
<dbReference type="SwissPalm" id="Q8BG40"/>
<dbReference type="PaxDb" id="10090-ENSMUSP00000034239"/>
<dbReference type="PeptideAtlas" id="Q8BG40"/>
<dbReference type="ProteomicsDB" id="264898"/>
<dbReference type="Pumba" id="Q8BG40"/>
<dbReference type="Antibodypedia" id="28973">
    <property type="antibodies" value="325 antibodies from 25 providers"/>
</dbReference>
<dbReference type="DNASU" id="74187"/>
<dbReference type="Ensembl" id="ENSMUST00000034239.9">
    <property type="protein sequence ID" value="ENSMUSP00000034239.8"/>
    <property type="gene ID" value="ENSMUSG00000031787.9"/>
</dbReference>
<dbReference type="GeneID" id="74187"/>
<dbReference type="KEGG" id="mmu:74187"/>
<dbReference type="UCSC" id="uc009mxt.1">
    <property type="organism name" value="mouse"/>
</dbReference>
<dbReference type="AGR" id="MGI:1921437"/>
<dbReference type="CTD" id="10300"/>
<dbReference type="MGI" id="MGI:1921437">
    <property type="gene designation" value="Katnb1"/>
</dbReference>
<dbReference type="VEuPathDB" id="HostDB:ENSMUSG00000031787"/>
<dbReference type="eggNOG" id="KOG0267">
    <property type="taxonomic scope" value="Eukaryota"/>
</dbReference>
<dbReference type="GeneTree" id="ENSGT00940000157918"/>
<dbReference type="HOGENOM" id="CLU_007811_0_0_1"/>
<dbReference type="InParanoid" id="Q8BG40"/>
<dbReference type="OMA" id="AMDVQCP"/>
<dbReference type="OrthoDB" id="10251605at2759"/>
<dbReference type="PhylomeDB" id="Q8BG40"/>
<dbReference type="TreeFam" id="TF332359"/>
<dbReference type="BRENDA" id="5.6.1.1">
    <property type="organism ID" value="3474"/>
</dbReference>
<dbReference type="BioGRID-ORCS" id="74187">
    <property type="hits" value="8 hits in 78 CRISPR screens"/>
</dbReference>
<dbReference type="ChiTaRS" id="Katnb1">
    <property type="organism name" value="mouse"/>
</dbReference>
<dbReference type="PRO" id="PR:Q8BG40"/>
<dbReference type="Proteomes" id="UP000000589">
    <property type="component" value="Chromosome 8"/>
</dbReference>
<dbReference type="RNAct" id="Q8BG40">
    <property type="molecule type" value="protein"/>
</dbReference>
<dbReference type="Bgee" id="ENSMUSG00000031787">
    <property type="expression patterns" value="Expressed in seminiferous tubule of testis and 235 other cell types or tissues"/>
</dbReference>
<dbReference type="ExpressionAtlas" id="Q8BG40">
    <property type="expression patterns" value="baseline and differential"/>
</dbReference>
<dbReference type="GO" id="GO:0030424">
    <property type="term" value="C:axon"/>
    <property type="evidence" value="ECO:0000314"/>
    <property type="project" value="MGI"/>
</dbReference>
<dbReference type="GO" id="GO:0005813">
    <property type="term" value="C:centrosome"/>
    <property type="evidence" value="ECO:0000314"/>
    <property type="project" value="MGI"/>
</dbReference>
<dbReference type="GO" id="GO:0005737">
    <property type="term" value="C:cytoplasm"/>
    <property type="evidence" value="ECO:0000250"/>
    <property type="project" value="UniProtKB"/>
</dbReference>
<dbReference type="GO" id="GO:0005829">
    <property type="term" value="C:cytosol"/>
    <property type="evidence" value="ECO:0007669"/>
    <property type="project" value="Ensembl"/>
</dbReference>
<dbReference type="GO" id="GO:0030426">
    <property type="term" value="C:growth cone"/>
    <property type="evidence" value="ECO:0007669"/>
    <property type="project" value="Ensembl"/>
</dbReference>
<dbReference type="GO" id="GO:0008352">
    <property type="term" value="C:katanin complex"/>
    <property type="evidence" value="ECO:0000266"/>
    <property type="project" value="MGI"/>
</dbReference>
<dbReference type="GO" id="GO:0005874">
    <property type="term" value="C:microtubule"/>
    <property type="evidence" value="ECO:0000250"/>
    <property type="project" value="UniProtKB"/>
</dbReference>
<dbReference type="GO" id="GO:0030496">
    <property type="term" value="C:midbody"/>
    <property type="evidence" value="ECO:0007669"/>
    <property type="project" value="Ensembl"/>
</dbReference>
<dbReference type="GO" id="GO:0043025">
    <property type="term" value="C:neuronal cell body"/>
    <property type="evidence" value="ECO:0007669"/>
    <property type="project" value="Ensembl"/>
</dbReference>
<dbReference type="GO" id="GO:0005886">
    <property type="term" value="C:plasma membrane"/>
    <property type="evidence" value="ECO:0007669"/>
    <property type="project" value="Ensembl"/>
</dbReference>
<dbReference type="GO" id="GO:0005819">
    <property type="term" value="C:spindle"/>
    <property type="evidence" value="ECO:0000250"/>
    <property type="project" value="UniProtKB"/>
</dbReference>
<dbReference type="GO" id="GO:0000922">
    <property type="term" value="C:spindle pole"/>
    <property type="evidence" value="ECO:0000250"/>
    <property type="project" value="UniProtKB"/>
</dbReference>
<dbReference type="GO" id="GO:0060590">
    <property type="term" value="F:ATPase regulator activity"/>
    <property type="evidence" value="ECO:0007669"/>
    <property type="project" value="Ensembl"/>
</dbReference>
<dbReference type="GO" id="GO:0070840">
    <property type="term" value="F:dynein complex binding"/>
    <property type="evidence" value="ECO:0000314"/>
    <property type="project" value="MGI"/>
</dbReference>
<dbReference type="GO" id="GO:0008017">
    <property type="term" value="F:microtubule binding"/>
    <property type="evidence" value="ECO:0007669"/>
    <property type="project" value="UniProtKB-UniRule"/>
</dbReference>
<dbReference type="GO" id="GO:0046982">
    <property type="term" value="F:protein heterodimerization activity"/>
    <property type="evidence" value="ECO:0007669"/>
    <property type="project" value="Ensembl"/>
</dbReference>
<dbReference type="GO" id="GO:0051301">
    <property type="term" value="P:cell division"/>
    <property type="evidence" value="ECO:0007669"/>
    <property type="project" value="UniProtKB-KW"/>
</dbReference>
<dbReference type="GO" id="GO:0051013">
    <property type="term" value="P:microtubule severing"/>
    <property type="evidence" value="ECO:0007669"/>
    <property type="project" value="UniProtKB-UniRule"/>
</dbReference>
<dbReference type="GO" id="GO:0007079">
    <property type="term" value="P:mitotic chromosome movement towards spindle pole"/>
    <property type="evidence" value="ECO:0007669"/>
    <property type="project" value="UniProtKB-UniRule"/>
</dbReference>
<dbReference type="GO" id="GO:0007026">
    <property type="term" value="P:negative regulation of microtubule depolymerization"/>
    <property type="evidence" value="ECO:0007669"/>
    <property type="project" value="Ensembl"/>
</dbReference>
<dbReference type="GO" id="GO:0043065">
    <property type="term" value="P:positive regulation of apoptotic process"/>
    <property type="evidence" value="ECO:0007669"/>
    <property type="project" value="Ensembl"/>
</dbReference>
<dbReference type="GO" id="GO:0031117">
    <property type="term" value="P:positive regulation of microtubule depolymerization"/>
    <property type="evidence" value="ECO:0007669"/>
    <property type="project" value="UniProtKB-UniRule"/>
</dbReference>
<dbReference type="GO" id="GO:0010976">
    <property type="term" value="P:positive regulation of neuron projection development"/>
    <property type="evidence" value="ECO:0007669"/>
    <property type="project" value="Ensembl"/>
</dbReference>
<dbReference type="CDD" id="cd00200">
    <property type="entry name" value="WD40"/>
    <property type="match status" value="1"/>
</dbReference>
<dbReference type="FunFam" id="2.130.10.10:FF:000348">
    <property type="entry name" value="Katanin p80 WD40 repeat-containing subunit B1"/>
    <property type="match status" value="1"/>
</dbReference>
<dbReference type="FunFam" id="2.130.10.10:FF:000583">
    <property type="entry name" value="Katanin p80 WD40 repeat-containing subunit B1 homolog"/>
    <property type="match status" value="1"/>
</dbReference>
<dbReference type="Gene3D" id="2.130.10.10">
    <property type="entry name" value="YVTN repeat-like/Quinoprotein amine dehydrogenase"/>
    <property type="match status" value="2"/>
</dbReference>
<dbReference type="HAMAP" id="MF_03022">
    <property type="entry name" value="Katanin_p80_B1"/>
    <property type="match status" value="1"/>
</dbReference>
<dbReference type="InterPro" id="IPR020472">
    <property type="entry name" value="G-protein_beta_WD-40_rep"/>
</dbReference>
<dbReference type="InterPro" id="IPR028021">
    <property type="entry name" value="Katanin_C-terminal"/>
</dbReference>
<dbReference type="InterPro" id="IPR026962">
    <property type="entry name" value="KTNB1"/>
</dbReference>
<dbReference type="InterPro" id="IPR015943">
    <property type="entry name" value="WD40/YVTN_repeat-like_dom_sf"/>
</dbReference>
<dbReference type="InterPro" id="IPR019775">
    <property type="entry name" value="WD40_repeat_CS"/>
</dbReference>
<dbReference type="InterPro" id="IPR036322">
    <property type="entry name" value="WD40_repeat_dom_sf"/>
</dbReference>
<dbReference type="InterPro" id="IPR001680">
    <property type="entry name" value="WD40_rpt"/>
</dbReference>
<dbReference type="PANTHER" id="PTHR19845">
    <property type="entry name" value="KATANIN P80 SUBUNIT"/>
    <property type="match status" value="1"/>
</dbReference>
<dbReference type="PANTHER" id="PTHR19845:SF0">
    <property type="entry name" value="KATANIN P80 WD40 REPEAT-CONTAINING SUBUNIT B1"/>
    <property type="match status" value="1"/>
</dbReference>
<dbReference type="Pfam" id="PF13925">
    <property type="entry name" value="Katanin_con80"/>
    <property type="match status" value="1"/>
</dbReference>
<dbReference type="Pfam" id="PF00400">
    <property type="entry name" value="WD40"/>
    <property type="match status" value="6"/>
</dbReference>
<dbReference type="PRINTS" id="PR00320">
    <property type="entry name" value="GPROTEINBRPT"/>
</dbReference>
<dbReference type="SMART" id="SM00320">
    <property type="entry name" value="WD40"/>
    <property type="match status" value="6"/>
</dbReference>
<dbReference type="SUPFAM" id="SSF50978">
    <property type="entry name" value="WD40 repeat-like"/>
    <property type="match status" value="1"/>
</dbReference>
<dbReference type="PROSITE" id="PS00678">
    <property type="entry name" value="WD_REPEATS_1"/>
    <property type="match status" value="3"/>
</dbReference>
<dbReference type="PROSITE" id="PS50082">
    <property type="entry name" value="WD_REPEATS_2"/>
    <property type="match status" value="5"/>
</dbReference>
<dbReference type="PROSITE" id="PS50294">
    <property type="entry name" value="WD_REPEATS_REGION"/>
    <property type="match status" value="1"/>
</dbReference>
<name>KTNB1_MOUSE</name>
<proteinExistence type="evidence at protein level"/>
<organism>
    <name type="scientific">Mus musculus</name>
    <name type="common">Mouse</name>
    <dbReference type="NCBI Taxonomy" id="10090"/>
    <lineage>
        <taxon>Eukaryota</taxon>
        <taxon>Metazoa</taxon>
        <taxon>Chordata</taxon>
        <taxon>Craniata</taxon>
        <taxon>Vertebrata</taxon>
        <taxon>Euteleostomi</taxon>
        <taxon>Mammalia</taxon>
        <taxon>Eutheria</taxon>
        <taxon>Euarchontoglires</taxon>
        <taxon>Glires</taxon>
        <taxon>Rodentia</taxon>
        <taxon>Myomorpha</taxon>
        <taxon>Muroidea</taxon>
        <taxon>Muridae</taxon>
        <taxon>Murinae</taxon>
        <taxon>Mus</taxon>
        <taxon>Mus</taxon>
    </lineage>
</organism>
<protein>
    <recommendedName>
        <fullName evidence="3">Katanin p80 WD40 repeat-containing subunit B1</fullName>
        <shortName evidence="3">Katanin p80 subunit B1</shortName>
    </recommendedName>
    <alternativeName>
        <fullName evidence="3">p80 katanin</fullName>
    </alternativeName>
</protein>
<feature type="chain" id="PRO_0000051050" description="Katanin p80 WD40 repeat-containing subunit B1">
    <location>
        <begin position="1"/>
        <end position="658"/>
    </location>
</feature>
<feature type="repeat" description="WD 1">
    <location>
        <begin position="18"/>
        <end position="58"/>
    </location>
</feature>
<feature type="repeat" description="WD 2">
    <location>
        <begin position="61"/>
        <end position="100"/>
    </location>
</feature>
<feature type="repeat" description="WD 3">
    <location>
        <begin position="103"/>
        <end position="142"/>
    </location>
</feature>
<feature type="repeat" description="WD 4">
    <location>
        <begin position="145"/>
        <end position="184"/>
    </location>
</feature>
<feature type="repeat" description="WD 5">
    <location>
        <begin position="187"/>
        <end position="226"/>
    </location>
</feature>
<feature type="repeat" description="WD 6">
    <location>
        <begin position="229"/>
        <end position="269"/>
    </location>
</feature>
<feature type="region of interest" description="Interaction with centrosomes" evidence="1">
    <location>
        <begin position="1"/>
        <end position="300"/>
    </location>
</feature>
<feature type="region of interest" description="Interaction with dynein">
    <location>
        <begin position="1"/>
        <end position="284"/>
    </location>
</feature>
<feature type="region of interest" description="Interaction with PAFAH1B1" evidence="5">
    <location>
        <begin position="285"/>
        <end position="437"/>
    </location>
</feature>
<feature type="region of interest" description="Disordered" evidence="4">
    <location>
        <begin position="311"/>
        <end position="419"/>
    </location>
</feature>
<feature type="region of interest" description="Disordered" evidence="4">
    <location>
        <begin position="434"/>
        <end position="458"/>
    </location>
</feature>
<feature type="region of interest" description="Interaction with KATNA1 and NDEL1" evidence="5">
    <location>
        <begin position="436"/>
        <end position="658"/>
    </location>
</feature>
<feature type="compositionally biased region" description="Polar residues" evidence="4">
    <location>
        <begin position="311"/>
        <end position="329"/>
    </location>
</feature>
<feature type="compositionally biased region" description="Basic and acidic residues" evidence="4">
    <location>
        <begin position="352"/>
        <end position="374"/>
    </location>
</feature>
<feature type="modified residue" description="Phosphothreonine" evidence="2">
    <location>
        <position position="395"/>
    </location>
</feature>
<feature type="mutagenesis site" description="Disrupts KATNA1:KATNB1 interaction with ASPM." evidence="7">
    <original>S</original>
    <variation>L</variation>
    <location>
        <position position="538"/>
    </location>
</feature>
<feature type="mutagenesis site" description="Disrupts KATNA1:KATNB1 interaction with ASPM; abolishes localization to microtubules minus ends; decreases ASPM localization to microtubules minus ends; no enhancement of ASPM activity in blocking microtubule minus-end growth." evidence="7">
    <original>Y</original>
    <variation>A</variation>
    <location>
        <position position="574"/>
    </location>
</feature>
<feature type="mutagenesis site" description="Abolishes localization to microtubules." evidence="7">
    <original>G</original>
    <variation>A</variation>
    <location>
        <position position="607"/>
    </location>
</feature>
<feature type="mutagenesis site" description="Abolishes localization to microtubules." evidence="7">
    <original>V</original>
    <variation>A</variation>
    <location>
        <position position="608"/>
    </location>
</feature>
<feature type="mutagenesis site" description="Abolishes localization to microtubules." evidence="7">
    <original>D</original>
    <variation>A</variation>
    <location>
        <position position="609"/>
    </location>
</feature>
<feature type="mutagenesis site" description="Abolishes localization to microtubules." evidence="7">
    <original>I</original>
    <variation>A</variation>
    <location>
        <position position="610"/>
    </location>
</feature>
<feature type="mutagenesis site" description="Abolishes localization to microtubules minus ends; decreases ASPM localization to microtubules minus ends; no enhancement of ASPM activity in blocking microtubule minus-end growth." evidence="7">
    <original>R</original>
    <variation>A</variation>
    <location>
        <position position="615"/>
    </location>
</feature>
<feature type="mutagenesis site" description="Abolishes localization to microtubules." evidence="7">
    <original>K</original>
    <variation>A</variation>
    <location>
        <position position="618"/>
    </location>
</feature>
<feature type="sequence conflict" description="In Ref. 1; BAC27487." evidence="8" ref="1">
    <original>P</original>
    <variation>H</variation>
    <location>
        <position position="455"/>
    </location>
</feature>
<feature type="sequence conflict" description="In Ref. 1; BAB26884." evidence="8" ref="1">
    <location>
        <position position="596"/>
    </location>
</feature>
<feature type="helix" evidence="9">
    <location>
        <begin position="487"/>
        <end position="495"/>
    </location>
</feature>
<feature type="helix" evidence="9">
    <location>
        <begin position="498"/>
        <end position="519"/>
    </location>
</feature>
<feature type="turn" evidence="9">
    <location>
        <begin position="520"/>
        <end position="522"/>
    </location>
</feature>
<feature type="helix" evidence="9">
    <location>
        <begin position="524"/>
        <end position="534"/>
    </location>
</feature>
<feature type="helix" evidence="9">
    <location>
        <begin position="537"/>
        <end position="547"/>
    </location>
</feature>
<feature type="helix" evidence="9">
    <location>
        <begin position="551"/>
        <end position="553"/>
    </location>
</feature>
<feature type="helix" evidence="9">
    <location>
        <begin position="556"/>
        <end position="569"/>
    </location>
</feature>
<feature type="helix" evidence="9">
    <location>
        <begin position="575"/>
        <end position="600"/>
    </location>
</feature>
<feature type="helix" evidence="9">
    <location>
        <begin position="612"/>
        <end position="637"/>
    </location>
</feature>
<feature type="helix" evidence="9">
    <location>
        <begin position="644"/>
        <end position="653"/>
    </location>
</feature>
<feature type="turn" evidence="10">
    <location>
        <begin position="654"/>
        <end position="656"/>
    </location>
</feature>
<evidence type="ECO:0000250" key="1"/>
<evidence type="ECO:0000250" key="2">
    <source>
        <dbReference type="UniProtKB" id="Q9BVA0"/>
    </source>
</evidence>
<evidence type="ECO:0000255" key="3">
    <source>
        <dbReference type="HAMAP-Rule" id="MF_03022"/>
    </source>
</evidence>
<evidence type="ECO:0000256" key="4">
    <source>
        <dbReference type="SAM" id="MobiDB-lite"/>
    </source>
</evidence>
<evidence type="ECO:0000269" key="5">
    <source>
    </source>
</evidence>
<evidence type="ECO:0000269" key="6">
    <source>
    </source>
</evidence>
<evidence type="ECO:0000269" key="7">
    <source>
    </source>
</evidence>
<evidence type="ECO:0000305" key="8"/>
<evidence type="ECO:0007829" key="9">
    <source>
        <dbReference type="PDB" id="5LB7"/>
    </source>
</evidence>
<evidence type="ECO:0007829" key="10">
    <source>
        <dbReference type="PDB" id="5OW5"/>
    </source>
</evidence>
<comment type="function">
    <text evidence="3 7">Participates in a complex which severs microtubules in an ATP-dependent manner. May act to target the enzymatic subunit of this complex to sites of action such as the centrosome. Microtubule severing may promote rapid reorganization of cellular microtubule arrays and the release of microtubules from the centrosome following nucleation. Microtubule release from the mitotic spindle poles may allow depolymerization of the microtubule end proximal to the spindle pole, leading to poleward microtubule flux and poleward motion of chromosome. The function in regulating microtubule dynamics at spindle poles seems to depend on the association of the katanin KATNA1:KATNB1 complex with ASPM which recruits it to microtubules. Reversely KATNA1:KATNB1 can enhance ASPM blocking activity on microtubule minus-end growth. Microtubule release within the cell body of neurons may be required for their transport into neuronal processes by microtubule-dependent motor proteins. This transport is required for axonal growth.</text>
</comment>
<comment type="subunit">
    <text evidence="2 3 5 7">Interacts with KATNA1. This interaction enhances the microtubule binding and severing activity of KATNA1 and also targets this activity to the centrosome (PubMed:16203747). This interaction is weakly competed by KATNBL1 which has a lower affinity for it (By similarity). Interacts with ASPM; the katanin complex formation KATNA1:KATNB1 is required for the association of ASPM (PubMed:28436967). Interacts with dynein, microtubules, NDEL1 and PAFAH1B1 (PubMed:16203747). Interacts with KATNAL1; this interaction is weakly competed by KATNBL1 which has a lower affinity for it (By similarity). Interacts with CAMSAP2 and CAMSAP3; leading to regulate the length of CAMSAP-decorated microtubule stretches (By similarity).</text>
</comment>
<comment type="interaction">
    <interactant intactId="EBI-7692933">
        <id>Q8BG40</id>
    </interactant>
    <interactant intactId="EBI-7692898">
        <id>Q9WV86</id>
        <label>Katna1</label>
    </interactant>
    <organismsDiffer>false</organismsDiffer>
    <experiments>8</experiments>
</comment>
<comment type="subcellular location">
    <subcellularLocation>
        <location evidence="3">Cytoplasm</location>
    </subcellularLocation>
    <subcellularLocation>
        <location evidence="3">Cytoplasm</location>
        <location evidence="3">Cytoskeleton</location>
        <location evidence="3">Microtubule organizing center</location>
        <location evidence="3">Centrosome</location>
    </subcellularLocation>
    <subcellularLocation>
        <location evidence="3">Cytoplasm</location>
        <location evidence="3">Cytoskeleton</location>
        <location evidence="3">Spindle pole</location>
    </subcellularLocation>
    <subcellularLocation>
        <location evidence="3">Cytoplasm</location>
        <location evidence="3">Cytoskeleton</location>
    </subcellularLocation>
    <subcellularLocation>
        <location evidence="2">Cytoplasm</location>
        <location evidence="2">Cytoskeleton</location>
        <location evidence="2">Spindle</location>
    </subcellularLocation>
    <text evidence="2 3">Predominantly cytoplasmic. Localized to the interphase centrosome and mitotic spindle poles (By similarity). Localizes within the cytoplasm, partially overlapping with microtubules, in interphase and to the mitotic spindle and spindle poles during mitosis (By similarity).</text>
</comment>
<comment type="disruption phenotype">
    <text evidence="6">Homozygous loss of the gene is embryonic lethal. Mutant animals have dramatically reduced body size, reduced limb bud outgrowth, microphthalmia to anophthalmia and forebrain abnormalities ranging from microcephaly to holoprosencephaly. Brains of mutant mice have reduced cycling and proliferating radial neuroepithelial progenitor cells compared to wild-type, with a more profound loss of cells that depend upon asymmetrical cell divisions. These cells also show evidence of increased apoptosis.</text>
</comment>
<comment type="similarity">
    <text evidence="3">Belongs to the WD repeat KATNB1 family.</text>
</comment>
<gene>
    <name type="primary">Katnb1</name>
</gene>
<sequence length="658" mass="72639">MATPVVTKTAWKLQEIVAHASNVSSLVLGKASGRLLATGGDDCRVNLWSINKPNCIMSLTGHTSPVESVRLNTPEELIVAGSQSGSIRVWDLEAAKILRTLMGHKANICSLDFHPYGEFVASGSQDTNIKLWDIRRKGCVFRYRGHSQAVRCLRFSPDGKWLASAADDHTVKLWDLTAGKMMSEFPGHTGPVNVVEFHPNEYLLASGSSDRTIRFWDLEKFQVVSCIEGEPGPVRSVLFNPDGCCLYSGCQDSLRVYGWEPERCFDVVLVNWGKVADLAICNDQLIGVAFSQSNVSSYVVDLTRVTRTGTVTQDPVQANQPLTQQTPNPGVSLRRIYERPSTTCSKPQRVKHNSESERRSPSSEDDRDERESRAEIQNAEDYNEIFQPKNSISRTPPRRSEPFPAPPEDDAATVKEVSKPSPAMDVQLPQLPVPNLEVPARPSVMTSTPAPKGEPDIIPATRNEPIGLKASDFLPAVKVPQQAELVDEDAMSQIRKGHDTMFVVLTSRHKNLDTVRAVWTTGDIKTSVDSAVAINDLSVVVDLLNIVNQKASLWKLDLCTTVLPQIEKLLQSKYESYVQTGCTSLKLILQRFLPLITDILAAPPSVGVDISREERLHKCRLCFKQLKSISGLVKSKSGLSGRHGSAFRELHLLMASLD</sequence>
<accession>Q8BG40</accession>
<accession>Q8CD18</accession>
<accession>Q8R1J0</accession>
<accession>Q9CWV2</accession>
<keyword id="KW-0002">3D-structure</keyword>
<keyword id="KW-0131">Cell cycle</keyword>
<keyword id="KW-0132">Cell division</keyword>
<keyword id="KW-0963">Cytoplasm</keyword>
<keyword id="KW-0206">Cytoskeleton</keyword>
<keyword id="KW-0493">Microtubule</keyword>
<keyword id="KW-0498">Mitosis</keyword>
<keyword id="KW-0597">Phosphoprotein</keyword>
<keyword id="KW-1185">Reference proteome</keyword>
<keyword id="KW-0677">Repeat</keyword>
<keyword id="KW-0853">WD repeat</keyword>
<reference key="1">
    <citation type="journal article" date="2005" name="Science">
        <title>The transcriptional landscape of the mammalian genome.</title>
        <authorList>
            <person name="Carninci P."/>
            <person name="Kasukawa T."/>
            <person name="Katayama S."/>
            <person name="Gough J."/>
            <person name="Frith M.C."/>
            <person name="Maeda N."/>
            <person name="Oyama R."/>
            <person name="Ravasi T."/>
            <person name="Lenhard B."/>
            <person name="Wells C."/>
            <person name="Kodzius R."/>
            <person name="Shimokawa K."/>
            <person name="Bajic V.B."/>
            <person name="Brenner S.E."/>
            <person name="Batalov S."/>
            <person name="Forrest A.R."/>
            <person name="Zavolan M."/>
            <person name="Davis M.J."/>
            <person name="Wilming L.G."/>
            <person name="Aidinis V."/>
            <person name="Allen J.E."/>
            <person name="Ambesi-Impiombato A."/>
            <person name="Apweiler R."/>
            <person name="Aturaliya R.N."/>
            <person name="Bailey T.L."/>
            <person name="Bansal M."/>
            <person name="Baxter L."/>
            <person name="Beisel K.W."/>
            <person name="Bersano T."/>
            <person name="Bono H."/>
            <person name="Chalk A.M."/>
            <person name="Chiu K.P."/>
            <person name="Choudhary V."/>
            <person name="Christoffels A."/>
            <person name="Clutterbuck D.R."/>
            <person name="Crowe M.L."/>
            <person name="Dalla E."/>
            <person name="Dalrymple B.P."/>
            <person name="de Bono B."/>
            <person name="Della Gatta G."/>
            <person name="di Bernardo D."/>
            <person name="Down T."/>
            <person name="Engstrom P."/>
            <person name="Fagiolini M."/>
            <person name="Faulkner G."/>
            <person name="Fletcher C.F."/>
            <person name="Fukushima T."/>
            <person name="Furuno M."/>
            <person name="Futaki S."/>
            <person name="Gariboldi M."/>
            <person name="Georgii-Hemming P."/>
            <person name="Gingeras T.R."/>
            <person name="Gojobori T."/>
            <person name="Green R.E."/>
            <person name="Gustincich S."/>
            <person name="Harbers M."/>
            <person name="Hayashi Y."/>
            <person name="Hensch T.K."/>
            <person name="Hirokawa N."/>
            <person name="Hill D."/>
            <person name="Huminiecki L."/>
            <person name="Iacono M."/>
            <person name="Ikeo K."/>
            <person name="Iwama A."/>
            <person name="Ishikawa T."/>
            <person name="Jakt M."/>
            <person name="Kanapin A."/>
            <person name="Katoh M."/>
            <person name="Kawasawa Y."/>
            <person name="Kelso J."/>
            <person name="Kitamura H."/>
            <person name="Kitano H."/>
            <person name="Kollias G."/>
            <person name="Krishnan S.P."/>
            <person name="Kruger A."/>
            <person name="Kummerfeld S.K."/>
            <person name="Kurochkin I.V."/>
            <person name="Lareau L.F."/>
            <person name="Lazarevic D."/>
            <person name="Lipovich L."/>
            <person name="Liu J."/>
            <person name="Liuni S."/>
            <person name="McWilliam S."/>
            <person name="Madan Babu M."/>
            <person name="Madera M."/>
            <person name="Marchionni L."/>
            <person name="Matsuda H."/>
            <person name="Matsuzawa S."/>
            <person name="Miki H."/>
            <person name="Mignone F."/>
            <person name="Miyake S."/>
            <person name="Morris K."/>
            <person name="Mottagui-Tabar S."/>
            <person name="Mulder N."/>
            <person name="Nakano N."/>
            <person name="Nakauchi H."/>
            <person name="Ng P."/>
            <person name="Nilsson R."/>
            <person name="Nishiguchi S."/>
            <person name="Nishikawa S."/>
            <person name="Nori F."/>
            <person name="Ohara O."/>
            <person name="Okazaki Y."/>
            <person name="Orlando V."/>
            <person name="Pang K.C."/>
            <person name="Pavan W.J."/>
            <person name="Pavesi G."/>
            <person name="Pesole G."/>
            <person name="Petrovsky N."/>
            <person name="Piazza S."/>
            <person name="Reed J."/>
            <person name="Reid J.F."/>
            <person name="Ring B.Z."/>
            <person name="Ringwald M."/>
            <person name="Rost B."/>
            <person name="Ruan Y."/>
            <person name="Salzberg S.L."/>
            <person name="Sandelin A."/>
            <person name="Schneider C."/>
            <person name="Schoenbach C."/>
            <person name="Sekiguchi K."/>
            <person name="Semple C.A."/>
            <person name="Seno S."/>
            <person name="Sessa L."/>
            <person name="Sheng Y."/>
            <person name="Shibata Y."/>
            <person name="Shimada H."/>
            <person name="Shimada K."/>
            <person name="Silva D."/>
            <person name="Sinclair B."/>
            <person name="Sperling S."/>
            <person name="Stupka E."/>
            <person name="Sugiura K."/>
            <person name="Sultana R."/>
            <person name="Takenaka Y."/>
            <person name="Taki K."/>
            <person name="Tammoja K."/>
            <person name="Tan S.L."/>
            <person name="Tang S."/>
            <person name="Taylor M.S."/>
            <person name="Tegner J."/>
            <person name="Teichmann S.A."/>
            <person name="Ueda H.R."/>
            <person name="van Nimwegen E."/>
            <person name="Verardo R."/>
            <person name="Wei C.L."/>
            <person name="Yagi K."/>
            <person name="Yamanishi H."/>
            <person name="Zabarovsky E."/>
            <person name="Zhu S."/>
            <person name="Zimmer A."/>
            <person name="Hide W."/>
            <person name="Bult C."/>
            <person name="Grimmond S.M."/>
            <person name="Teasdale R.D."/>
            <person name="Liu E.T."/>
            <person name="Brusic V."/>
            <person name="Quackenbush J."/>
            <person name="Wahlestedt C."/>
            <person name="Mattick J.S."/>
            <person name="Hume D.A."/>
            <person name="Kai C."/>
            <person name="Sasaki D."/>
            <person name="Tomaru Y."/>
            <person name="Fukuda S."/>
            <person name="Kanamori-Katayama M."/>
            <person name="Suzuki M."/>
            <person name="Aoki J."/>
            <person name="Arakawa T."/>
            <person name="Iida J."/>
            <person name="Imamura K."/>
            <person name="Itoh M."/>
            <person name="Kato T."/>
            <person name="Kawaji H."/>
            <person name="Kawagashira N."/>
            <person name="Kawashima T."/>
            <person name="Kojima M."/>
            <person name="Kondo S."/>
            <person name="Konno H."/>
            <person name="Nakano K."/>
            <person name="Ninomiya N."/>
            <person name="Nishio T."/>
            <person name="Okada M."/>
            <person name="Plessy C."/>
            <person name="Shibata K."/>
            <person name="Shiraki T."/>
            <person name="Suzuki S."/>
            <person name="Tagami M."/>
            <person name="Waki K."/>
            <person name="Watahiki A."/>
            <person name="Okamura-Oho Y."/>
            <person name="Suzuki H."/>
            <person name="Kawai J."/>
            <person name="Hayashizaki Y."/>
        </authorList>
    </citation>
    <scope>NUCLEOTIDE SEQUENCE [LARGE SCALE MRNA]</scope>
    <source>
        <strain>C57BL/6J</strain>
        <strain>NOD</strain>
        <tissue>Diencephalon</tissue>
        <tissue>Testis</tissue>
        <tissue>Thymus</tissue>
    </source>
</reference>
<reference key="2">
    <citation type="journal article" date="2004" name="Genome Res.">
        <title>The status, quality, and expansion of the NIH full-length cDNA project: the Mammalian Gene Collection (MGC).</title>
        <authorList>
            <consortium name="The MGC Project Team"/>
        </authorList>
    </citation>
    <scope>NUCLEOTIDE SEQUENCE [LARGE SCALE MRNA]</scope>
    <source>
        <strain>FVB/N</strain>
        <tissue>Colon</tissue>
        <tissue>Mammary tumor</tissue>
    </source>
</reference>
<reference key="3">
    <citation type="journal article" date="2005" name="Hum. Mol. Genet.">
        <title>Recruitment of katanin p60 by phosphorylated NDEL1, an LIS1 interacting protein, is essential for mitotic cell division and neuronal migration.</title>
        <authorList>
            <person name="Toyo-Oka K."/>
            <person name="Sasaki S."/>
            <person name="Yano Y."/>
            <person name="Mori D."/>
            <person name="Kobayashi T."/>
            <person name="Toyoshima Y.Y."/>
            <person name="Tokuoka S.M."/>
            <person name="Ishii S."/>
            <person name="Shimizu T."/>
            <person name="Muramatsu M."/>
            <person name="Hiraiwa N."/>
            <person name="Yoshiki A."/>
            <person name="Wynshaw-Boris A."/>
            <person name="Hirotsune S."/>
        </authorList>
    </citation>
    <scope>INTERACTION WITH DYNEIN; KATNA1; NDEL1 AND PAFAH1B1</scope>
</reference>
<reference key="4">
    <citation type="journal article" date="2010" name="Cell">
        <title>A tissue-specific atlas of mouse protein phosphorylation and expression.</title>
        <authorList>
            <person name="Huttlin E.L."/>
            <person name="Jedrychowski M.P."/>
            <person name="Elias J.E."/>
            <person name="Goswami T."/>
            <person name="Rad R."/>
            <person name="Beausoleil S.A."/>
            <person name="Villen J."/>
            <person name="Haas W."/>
            <person name="Sowa M.E."/>
            <person name="Gygi S.P."/>
        </authorList>
    </citation>
    <scope>IDENTIFICATION BY MASS SPECTROMETRY [LARGE SCALE ANALYSIS]</scope>
    <source>
        <tissue>Brain</tissue>
        <tissue>Testis</tissue>
    </source>
</reference>
<reference key="5">
    <citation type="journal article" date="2014" name="Neuron">
        <title>Katanin p80 regulates human cortical development by limiting centriole and cilia number.</title>
        <authorList>
            <person name="Hu W.F."/>
            <person name="Pomp O."/>
            <person name="Ben-Omran T."/>
            <person name="Kodani A."/>
            <person name="Henke K."/>
            <person name="Mochida G.H."/>
            <person name="Yu T.W."/>
            <person name="Woodworth M.B."/>
            <person name="Bonnard C."/>
            <person name="Raj G.S."/>
            <person name="Tan T.T."/>
            <person name="Hamamy H."/>
            <person name="Masri A."/>
            <person name="Shboul M."/>
            <person name="Al Saffar M."/>
            <person name="Partlow J.N."/>
            <person name="Al-Dosari M."/>
            <person name="Alazami A."/>
            <person name="Alowain M."/>
            <person name="Alkuraya F.S."/>
            <person name="Reiter J.F."/>
            <person name="Harris M.P."/>
            <person name="Reversade B."/>
            <person name="Walsh C.A."/>
        </authorList>
    </citation>
    <scope>DISRUPTION PHENOTYPE</scope>
</reference>
<reference key="6">
    <citation type="journal article" date="2017" name="Nat. Cell Biol.">
        <title>Microtubule minus-end regulation at spindle poles by an ASPM-katanin complex.</title>
        <authorList>
            <person name="Jiang K."/>
            <person name="Rezabkova L."/>
            <person name="Hua S."/>
            <person name="Liu Q."/>
            <person name="Capitani G."/>
            <person name="Maarten Altelaar A.F."/>
            <person name="Heck A.J.R."/>
            <person name="Kammerer R.A."/>
            <person name="Steinmetz M.O."/>
            <person name="Akhmanova A."/>
        </authorList>
    </citation>
    <scope>X-RAY CRYSTALLOGRAPHY (1.5 ANGSTROMS) OF 485-656 IN COMPLEX WITH KATNA1</scope>
    <scope>FUNCTION</scope>
    <scope>INTERACTION WITH ASPM</scope>
    <scope>MUTAGENESIS OF GLY-607; VAL-608; ASP-609; ILE-610; ARG-615 AND LYS-618</scope>
</reference>